<keyword id="KW-0249">Electron transport</keyword>
<keyword id="KW-0472">Membrane</keyword>
<keyword id="KW-0496">Mitochondrion</keyword>
<keyword id="KW-0999">Mitochondrion inner membrane</keyword>
<keyword id="KW-0520">NAD</keyword>
<keyword id="KW-1185">Reference proteome</keyword>
<keyword id="KW-0679">Respiratory chain</keyword>
<keyword id="KW-1278">Translocase</keyword>
<keyword id="KW-0812">Transmembrane</keyword>
<keyword id="KW-1133">Transmembrane helix</keyword>
<keyword id="KW-0813">Transport</keyword>
<keyword id="KW-0830">Ubiquinone</keyword>
<sequence>MTYALFLLSVSLVMGFVGFSSKPSPIYGGLVLIVSGVVGCAIILNYGGGYMGLMVFLIYLGGMMVVFGYTTAMAIEEYPEAWGSGVEVLVSVLVGLAMEVGLVLWVKGYDGMVVVVNFNSVGSWMIYEGEGPGLIREDPIGAGALYDYGRWLVVVTGWTLFVGVYIVIEIARGN</sequence>
<organism>
    <name type="scientific">Pan troglodytes</name>
    <name type="common">Chimpanzee</name>
    <dbReference type="NCBI Taxonomy" id="9598"/>
    <lineage>
        <taxon>Eukaryota</taxon>
        <taxon>Metazoa</taxon>
        <taxon>Chordata</taxon>
        <taxon>Craniata</taxon>
        <taxon>Vertebrata</taxon>
        <taxon>Euteleostomi</taxon>
        <taxon>Mammalia</taxon>
        <taxon>Eutheria</taxon>
        <taxon>Euarchontoglires</taxon>
        <taxon>Primates</taxon>
        <taxon>Haplorrhini</taxon>
        <taxon>Catarrhini</taxon>
        <taxon>Hominidae</taxon>
        <taxon>Pan</taxon>
    </lineage>
</organism>
<gene>
    <name type="primary">MT-ND6</name>
    <name type="synonym">MTND6</name>
    <name type="synonym">NADH6</name>
    <name type="synonym">ND6</name>
</gene>
<accession>Q9T9V6</accession>
<geneLocation type="mitochondrion"/>
<name>NU6M_PANTR</name>
<proteinExistence type="inferred from homology"/>
<dbReference type="EC" id="7.1.1.2" evidence="1"/>
<dbReference type="EMBL" id="D38113">
    <property type="protein sequence ID" value="BAA85275.1"/>
    <property type="molecule type" value="Genomic_DNA"/>
</dbReference>
<dbReference type="RefSeq" id="NP_008197.1">
    <property type="nucleotide sequence ID" value="NC_001643.1"/>
</dbReference>
<dbReference type="SMR" id="Q9T9V6"/>
<dbReference type="FunCoup" id="Q9T9V6">
    <property type="interactions" value="326"/>
</dbReference>
<dbReference type="STRING" id="9598.ENSPTRP00000061410"/>
<dbReference type="PaxDb" id="9598-ENSPTRP00000061410"/>
<dbReference type="Ensembl" id="ENSPTRT00000076408.1">
    <property type="protein sequence ID" value="ENSPTRP00000061410.1"/>
    <property type="gene ID" value="ENSPTRG00000042630.1"/>
</dbReference>
<dbReference type="GeneID" id="807861"/>
<dbReference type="KEGG" id="ptr:807861"/>
<dbReference type="CTD" id="4541"/>
<dbReference type="VGNC" id="VGNC:11724">
    <property type="gene designation" value="MT-ND6"/>
</dbReference>
<dbReference type="eggNOG" id="ENOG502S2Q2">
    <property type="taxonomic scope" value="Eukaryota"/>
</dbReference>
<dbReference type="GeneTree" id="ENSGT00390000003988"/>
<dbReference type="HOGENOM" id="CLU_129718_0_0_1"/>
<dbReference type="InParanoid" id="Q9T9V6"/>
<dbReference type="OMA" id="WVIYDTG"/>
<dbReference type="Proteomes" id="UP000002277">
    <property type="component" value="Mitochondrion"/>
</dbReference>
<dbReference type="Bgee" id="ENSPTRG00000042630">
    <property type="expression patterns" value="Expressed in primary visual cortex and 20 other cell types or tissues"/>
</dbReference>
<dbReference type="GO" id="GO:0005743">
    <property type="term" value="C:mitochondrial inner membrane"/>
    <property type="evidence" value="ECO:0000250"/>
    <property type="project" value="UniProtKB"/>
</dbReference>
<dbReference type="GO" id="GO:0005739">
    <property type="term" value="C:mitochondrion"/>
    <property type="evidence" value="ECO:0000318"/>
    <property type="project" value="GO_Central"/>
</dbReference>
<dbReference type="GO" id="GO:0045271">
    <property type="term" value="C:respiratory chain complex I"/>
    <property type="evidence" value="ECO:0007669"/>
    <property type="project" value="Ensembl"/>
</dbReference>
<dbReference type="GO" id="GO:0008137">
    <property type="term" value="F:NADH dehydrogenase (ubiquinone) activity"/>
    <property type="evidence" value="ECO:0000250"/>
    <property type="project" value="UniProtKB"/>
</dbReference>
<dbReference type="GO" id="GO:0006120">
    <property type="term" value="P:mitochondrial electron transport, NADH to ubiquinone"/>
    <property type="evidence" value="ECO:0000250"/>
    <property type="project" value="UniProtKB"/>
</dbReference>
<dbReference type="GO" id="GO:0032981">
    <property type="term" value="P:mitochondrial respiratory chain complex I assembly"/>
    <property type="evidence" value="ECO:0000250"/>
    <property type="project" value="UniProtKB"/>
</dbReference>
<dbReference type="InterPro" id="IPR050269">
    <property type="entry name" value="ComplexI_Subunit6"/>
</dbReference>
<dbReference type="InterPro" id="IPR001457">
    <property type="entry name" value="NADH_UbQ/plastoQ_OxRdtase_su6"/>
</dbReference>
<dbReference type="PANTHER" id="PTHR11435">
    <property type="entry name" value="NADH UBIQUINONE OXIDOREDUCTASE SUBUNIT ND6"/>
    <property type="match status" value="1"/>
</dbReference>
<dbReference type="PANTHER" id="PTHR11435:SF1">
    <property type="entry name" value="NADH-UBIQUINONE OXIDOREDUCTASE CHAIN 6"/>
    <property type="match status" value="1"/>
</dbReference>
<dbReference type="Pfam" id="PF00499">
    <property type="entry name" value="Oxidored_q3"/>
    <property type="match status" value="1"/>
</dbReference>
<protein>
    <recommendedName>
        <fullName>NADH-ubiquinone oxidoreductase chain 6</fullName>
        <ecNumber evidence="1">7.1.1.2</ecNumber>
    </recommendedName>
    <alternativeName>
        <fullName>NADH dehydrogenase subunit 6</fullName>
    </alternativeName>
</protein>
<feature type="chain" id="PRO_0000118310" description="NADH-ubiquinone oxidoreductase chain 6">
    <location>
        <begin position="1"/>
        <end position="174"/>
    </location>
</feature>
<feature type="transmembrane region" description="Helical" evidence="3">
    <location>
        <begin position="1"/>
        <end position="21"/>
    </location>
</feature>
<feature type="transmembrane region" description="Helical" evidence="3">
    <location>
        <begin position="24"/>
        <end position="44"/>
    </location>
</feature>
<feature type="transmembrane region" description="Helical" evidence="3">
    <location>
        <begin position="47"/>
        <end position="67"/>
    </location>
</feature>
<feature type="transmembrane region" description="Helical" evidence="3">
    <location>
        <begin position="86"/>
        <end position="106"/>
    </location>
</feature>
<feature type="transmembrane region" description="Helical" evidence="3">
    <location>
        <begin position="111"/>
        <end position="131"/>
    </location>
</feature>
<feature type="transmembrane region" description="Helical" evidence="3">
    <location>
        <begin position="151"/>
        <end position="171"/>
    </location>
</feature>
<reference key="1">
    <citation type="journal article" date="1995" name="Proc. Natl. Acad. Sci. U.S.A.">
        <title>Recent African origin of modern humans revealed by complete sequences of hominoid mitochondrial DNAs.</title>
        <authorList>
            <person name="Horai S."/>
            <person name="Hayasaka K."/>
            <person name="Kondo R."/>
            <person name="Tsugane K."/>
            <person name="Takahata N."/>
        </authorList>
    </citation>
    <scope>NUCLEOTIDE SEQUENCE [GENOMIC DNA]</scope>
</reference>
<evidence type="ECO:0000250" key="1">
    <source>
        <dbReference type="UniProtKB" id="P03923"/>
    </source>
</evidence>
<evidence type="ECO:0000250" key="2">
    <source>
        <dbReference type="UniProtKB" id="P03924"/>
    </source>
</evidence>
<evidence type="ECO:0000255" key="3"/>
<evidence type="ECO:0000305" key="4"/>
<comment type="function">
    <text evidence="1">Core subunit of the mitochondrial membrane respiratory chain NADH dehydrogenase (Complex I) which catalyzes electron transfer from NADH through the respiratory chain, using ubiquinone as an electron acceptor. Essential for the catalytic activity and assembly of complex I.</text>
</comment>
<comment type="catalytic activity">
    <reaction evidence="1">
        <text>a ubiquinone + NADH + 5 H(+)(in) = a ubiquinol + NAD(+) + 4 H(+)(out)</text>
        <dbReference type="Rhea" id="RHEA:29091"/>
        <dbReference type="Rhea" id="RHEA-COMP:9565"/>
        <dbReference type="Rhea" id="RHEA-COMP:9566"/>
        <dbReference type="ChEBI" id="CHEBI:15378"/>
        <dbReference type="ChEBI" id="CHEBI:16389"/>
        <dbReference type="ChEBI" id="CHEBI:17976"/>
        <dbReference type="ChEBI" id="CHEBI:57540"/>
        <dbReference type="ChEBI" id="CHEBI:57945"/>
        <dbReference type="EC" id="7.1.1.2"/>
    </reaction>
</comment>
<comment type="subunit">
    <text evidence="2">Core subunit of respiratory chain NADH dehydrogenase (Complex I) which is composed of 45 different subunits.</text>
</comment>
<comment type="subcellular location">
    <subcellularLocation>
        <location evidence="2">Mitochondrion inner membrane</location>
        <topology evidence="3">Multi-pass membrane protein</topology>
    </subcellularLocation>
</comment>
<comment type="similarity">
    <text evidence="4">Belongs to the complex I subunit 6 family.</text>
</comment>